<comment type="similarity">
    <text evidence="3">Belongs to the glutaredoxin family. Monothiol subfamily.</text>
</comment>
<organism>
    <name type="scientific">Synechocystis sp. (strain ATCC 27184 / PCC 6803 / Kazusa)</name>
    <dbReference type="NCBI Taxonomy" id="1111708"/>
    <lineage>
        <taxon>Bacteria</taxon>
        <taxon>Bacillati</taxon>
        <taxon>Cyanobacteriota</taxon>
        <taxon>Cyanophyceae</taxon>
        <taxon>Synechococcales</taxon>
        <taxon>Merismopediaceae</taxon>
        <taxon>Synechocystis</taxon>
    </lineage>
</organism>
<reference key="1">
    <citation type="journal article" date="1996" name="DNA Res.">
        <title>Sequence analysis of the genome of the unicellular cyanobacterium Synechocystis sp. strain PCC6803. II. Sequence determination of the entire genome and assignment of potential protein-coding regions.</title>
        <authorList>
            <person name="Kaneko T."/>
            <person name="Sato S."/>
            <person name="Kotani H."/>
            <person name="Tanaka A."/>
            <person name="Asamizu E."/>
            <person name="Nakamura Y."/>
            <person name="Miyajima N."/>
            <person name="Hirosawa M."/>
            <person name="Sugiura M."/>
            <person name="Sasamoto S."/>
            <person name="Kimura T."/>
            <person name="Hosouchi T."/>
            <person name="Matsuno A."/>
            <person name="Muraki A."/>
            <person name="Nakazaki N."/>
            <person name="Naruo K."/>
            <person name="Okumura S."/>
            <person name="Shimpo S."/>
            <person name="Takeuchi C."/>
            <person name="Wada T."/>
            <person name="Watanabe A."/>
            <person name="Yamada M."/>
            <person name="Yasuda M."/>
            <person name="Tabata S."/>
        </authorList>
    </citation>
    <scope>NUCLEOTIDE SEQUENCE [LARGE SCALE GENOMIC DNA]</scope>
    <source>
        <strain>ATCC 27184 / PCC 6803 / Kazusa</strain>
    </source>
</reference>
<dbReference type="EMBL" id="BA000022">
    <property type="protein sequence ID" value="BAA17078.1"/>
    <property type="molecule type" value="Genomic_DNA"/>
</dbReference>
<dbReference type="PIR" id="S75164">
    <property type="entry name" value="S75164"/>
</dbReference>
<dbReference type="SMR" id="P73056"/>
<dbReference type="STRING" id="1148.gene:10497939"/>
<dbReference type="PaxDb" id="1148-1652154"/>
<dbReference type="EnsemblBacteria" id="BAA17078">
    <property type="protein sequence ID" value="BAA17078"/>
    <property type="gene ID" value="BAA17078"/>
</dbReference>
<dbReference type="KEGG" id="syn:slr1846"/>
<dbReference type="eggNOG" id="COG0278">
    <property type="taxonomic scope" value="Bacteria"/>
</dbReference>
<dbReference type="InParanoid" id="P73056"/>
<dbReference type="PhylomeDB" id="P73056"/>
<dbReference type="Proteomes" id="UP000001425">
    <property type="component" value="Chromosome"/>
</dbReference>
<dbReference type="GO" id="GO:0051537">
    <property type="term" value="F:2 iron, 2 sulfur cluster binding"/>
    <property type="evidence" value="ECO:0007669"/>
    <property type="project" value="UniProtKB-KW"/>
</dbReference>
<dbReference type="GO" id="GO:0015036">
    <property type="term" value="F:disulfide oxidoreductase activity"/>
    <property type="evidence" value="ECO:0007669"/>
    <property type="project" value="InterPro"/>
</dbReference>
<dbReference type="GO" id="GO:0046872">
    <property type="term" value="F:metal ion binding"/>
    <property type="evidence" value="ECO:0007669"/>
    <property type="project" value="UniProtKB-KW"/>
</dbReference>
<dbReference type="CDD" id="cd03028">
    <property type="entry name" value="GRX_PICOT_like"/>
    <property type="match status" value="1"/>
</dbReference>
<dbReference type="FunFam" id="3.40.30.10:FF:000005">
    <property type="entry name" value="Glutaredoxin 5"/>
    <property type="match status" value="1"/>
</dbReference>
<dbReference type="Gene3D" id="3.40.30.10">
    <property type="entry name" value="Glutaredoxin"/>
    <property type="match status" value="1"/>
</dbReference>
<dbReference type="InterPro" id="IPR002109">
    <property type="entry name" value="Glutaredoxin"/>
</dbReference>
<dbReference type="InterPro" id="IPR033658">
    <property type="entry name" value="GRX_PICOT-like"/>
</dbReference>
<dbReference type="InterPro" id="IPR014434">
    <property type="entry name" value="Monothiol_GRX"/>
</dbReference>
<dbReference type="InterPro" id="IPR004480">
    <property type="entry name" value="Monothiol_GRX-rel"/>
</dbReference>
<dbReference type="InterPro" id="IPR036249">
    <property type="entry name" value="Thioredoxin-like_sf"/>
</dbReference>
<dbReference type="NCBIfam" id="TIGR00365">
    <property type="entry name" value="Grx4 family monothiol glutaredoxin"/>
    <property type="match status" value="1"/>
</dbReference>
<dbReference type="PANTHER" id="PTHR10293">
    <property type="entry name" value="GLUTAREDOXIN FAMILY MEMBER"/>
    <property type="match status" value="1"/>
</dbReference>
<dbReference type="PANTHER" id="PTHR10293:SF16">
    <property type="entry name" value="GLUTAREDOXIN-RELATED PROTEIN 5, MITOCHONDRIAL"/>
    <property type="match status" value="1"/>
</dbReference>
<dbReference type="Pfam" id="PF00462">
    <property type="entry name" value="Glutaredoxin"/>
    <property type="match status" value="1"/>
</dbReference>
<dbReference type="PIRSF" id="PIRSF005894">
    <property type="entry name" value="Monothiol_GRX"/>
    <property type="match status" value="1"/>
</dbReference>
<dbReference type="SUPFAM" id="SSF52833">
    <property type="entry name" value="Thioredoxin-like"/>
    <property type="match status" value="1"/>
</dbReference>
<dbReference type="PROSITE" id="PS51354">
    <property type="entry name" value="GLUTAREDOXIN_2"/>
    <property type="match status" value="1"/>
</dbReference>
<feature type="chain" id="PRO_0000102266" description="Uncharacterized monothiol glutaredoxin ycf64-like">
    <location>
        <begin position="1"/>
        <end position="107"/>
    </location>
</feature>
<feature type="domain" description="Glutaredoxin" evidence="2">
    <location>
        <begin position="6"/>
        <end position="107"/>
    </location>
</feature>
<feature type="binding site" evidence="1">
    <location>
        <position position="23"/>
    </location>
    <ligand>
        <name>glutathione</name>
        <dbReference type="ChEBI" id="CHEBI:57925"/>
    </ligand>
</feature>
<feature type="binding site" evidence="1">
    <location>
        <position position="31"/>
    </location>
    <ligand>
        <name>[2Fe-2S] cluster</name>
        <dbReference type="ChEBI" id="CHEBI:190135"/>
        <note>ligand shared between dimeric partners</note>
    </ligand>
</feature>
<feature type="binding site" evidence="1">
    <location>
        <position position="60"/>
    </location>
    <ligand>
        <name>glutathione</name>
        <dbReference type="ChEBI" id="CHEBI:57925"/>
    </ligand>
</feature>
<feature type="binding site" evidence="1">
    <location>
        <begin position="85"/>
        <end position="86"/>
    </location>
    <ligand>
        <name>glutathione</name>
        <dbReference type="ChEBI" id="CHEBI:57925"/>
    </ligand>
</feature>
<name>YC64L_SYNY3</name>
<keyword id="KW-0001">2Fe-2S</keyword>
<keyword id="KW-0408">Iron</keyword>
<keyword id="KW-0411">Iron-sulfur</keyword>
<keyword id="KW-0479">Metal-binding</keyword>
<keyword id="KW-0676">Redox-active center</keyword>
<keyword id="KW-1185">Reference proteome</keyword>
<accession>P73056</accession>
<protein>
    <recommendedName>
        <fullName>Uncharacterized monothiol glutaredoxin ycf64-like</fullName>
    </recommendedName>
</protein>
<evidence type="ECO:0000250" key="1"/>
<evidence type="ECO:0000255" key="2">
    <source>
        <dbReference type="PROSITE-ProRule" id="PRU00686"/>
    </source>
</evidence>
<evidence type="ECO:0000305" key="3"/>
<gene>
    <name type="ordered locus">slr1846</name>
</gene>
<sequence>MNPETKARIDQLVTANKVMVFMKGTKLMPQCGFSNNVVQILNMLGIPFETLDVLADAEIRQGIKEYSNWPTIPQVYVNGEFVGGSDIMIELYQNGELQEMLEVALAS</sequence>
<proteinExistence type="inferred from homology"/>